<organism>
    <name type="scientific">Mesocricetus auratus</name>
    <name type="common">Golden hamster</name>
    <dbReference type="NCBI Taxonomy" id="10036"/>
    <lineage>
        <taxon>Eukaryota</taxon>
        <taxon>Metazoa</taxon>
        <taxon>Chordata</taxon>
        <taxon>Craniata</taxon>
        <taxon>Vertebrata</taxon>
        <taxon>Euteleostomi</taxon>
        <taxon>Mammalia</taxon>
        <taxon>Eutheria</taxon>
        <taxon>Euarchontoglires</taxon>
        <taxon>Glires</taxon>
        <taxon>Rodentia</taxon>
        <taxon>Myomorpha</taxon>
        <taxon>Muroidea</taxon>
        <taxon>Cricetidae</taxon>
        <taxon>Cricetinae</taxon>
        <taxon>Mesocricetus</taxon>
    </lineage>
</organism>
<sequence>IGEPINERGPIKTKQFAPIHAEAPDFLNMSVDQEILVTGIKVVDLLAPYAKGGKIGLFGGAVVGKTVLIMELINNVAKAHGGYSVFAGVGERTREGNDLYHEMIESGVINLKDATSKVALVYGQMNEPPGARARVALTGLTVAEYFRDQEGQDVLLFIDNIFRFTQAGSEVSALLGRIPSAVGYQPTLATDMGTMQERITTTKKGSITSVQAIYVPADDLTDPAPATTFAHLDATTVLSRAIAELGIYPAVDPLDSTSRIMDPNIVGNEHYDVARGVQKILQDYKSLQDIIAILGMDELSEEDKLTVSRARKIQRFLSQPFQVAEVFTGHMGKLVPLKETIKGFQQMLAGDYDHLPEQAYYI</sequence>
<dbReference type="EC" id="7.1.2.2" evidence="2"/>
<dbReference type="EMBL" id="DQ403102">
    <property type="protein sequence ID" value="ABD77235.1"/>
    <property type="molecule type" value="mRNA"/>
</dbReference>
<dbReference type="SMR" id="Q0QEP2"/>
<dbReference type="Proteomes" id="UP000189706">
    <property type="component" value="Unplaced"/>
</dbReference>
<dbReference type="GO" id="GO:0005743">
    <property type="term" value="C:mitochondrial inner membrane"/>
    <property type="evidence" value="ECO:0007669"/>
    <property type="project" value="UniProtKB-SubCell"/>
</dbReference>
<dbReference type="GO" id="GO:0005739">
    <property type="term" value="C:mitochondrion"/>
    <property type="evidence" value="ECO:0000250"/>
    <property type="project" value="UniProtKB"/>
</dbReference>
<dbReference type="GO" id="GO:0045259">
    <property type="term" value="C:proton-transporting ATP synthase complex"/>
    <property type="evidence" value="ECO:0000250"/>
    <property type="project" value="UniProtKB"/>
</dbReference>
<dbReference type="GO" id="GO:0005524">
    <property type="term" value="F:ATP binding"/>
    <property type="evidence" value="ECO:0007669"/>
    <property type="project" value="UniProtKB-KW"/>
</dbReference>
<dbReference type="GO" id="GO:0046933">
    <property type="term" value="F:proton-transporting ATP synthase activity, rotational mechanism"/>
    <property type="evidence" value="ECO:0000250"/>
    <property type="project" value="UniProtKB"/>
</dbReference>
<dbReference type="GO" id="GO:0015986">
    <property type="term" value="P:proton motive force-driven ATP synthesis"/>
    <property type="evidence" value="ECO:0000250"/>
    <property type="project" value="UniProtKB"/>
</dbReference>
<dbReference type="GO" id="GO:0042776">
    <property type="term" value="P:proton motive force-driven mitochondrial ATP synthesis"/>
    <property type="evidence" value="ECO:0007669"/>
    <property type="project" value="TreeGrafter"/>
</dbReference>
<dbReference type="CDD" id="cd18110">
    <property type="entry name" value="ATP-synt_F1_beta_C"/>
    <property type="match status" value="1"/>
</dbReference>
<dbReference type="CDD" id="cd01133">
    <property type="entry name" value="F1-ATPase_beta_CD"/>
    <property type="match status" value="1"/>
</dbReference>
<dbReference type="FunFam" id="1.10.1140.10:FF:000001">
    <property type="entry name" value="ATP synthase subunit beta"/>
    <property type="match status" value="1"/>
</dbReference>
<dbReference type="FunFam" id="3.40.50.300:FF:000026">
    <property type="entry name" value="ATP synthase subunit beta"/>
    <property type="match status" value="1"/>
</dbReference>
<dbReference type="Gene3D" id="1.10.1140.10">
    <property type="entry name" value="Bovine Mitochondrial F1-atpase, Atp Synthase Beta Chain, Chain D, domain 3"/>
    <property type="match status" value="1"/>
</dbReference>
<dbReference type="Gene3D" id="3.40.50.300">
    <property type="entry name" value="P-loop containing nucleotide triphosphate hydrolases"/>
    <property type="match status" value="1"/>
</dbReference>
<dbReference type="InterPro" id="IPR055190">
    <property type="entry name" value="ATP-synt_VA_C"/>
</dbReference>
<dbReference type="InterPro" id="IPR005722">
    <property type="entry name" value="ATP_synth_F1_bsu"/>
</dbReference>
<dbReference type="InterPro" id="IPR020003">
    <property type="entry name" value="ATPase_a/bsu_AS"/>
</dbReference>
<dbReference type="InterPro" id="IPR050053">
    <property type="entry name" value="ATPase_alpha/beta_chains"/>
</dbReference>
<dbReference type="InterPro" id="IPR000194">
    <property type="entry name" value="ATPase_F1/V1/A1_a/bsu_nucl-bd"/>
</dbReference>
<dbReference type="InterPro" id="IPR024034">
    <property type="entry name" value="ATPase_F1/V1_b/a_C"/>
</dbReference>
<dbReference type="InterPro" id="IPR027417">
    <property type="entry name" value="P-loop_NTPase"/>
</dbReference>
<dbReference type="NCBIfam" id="TIGR01039">
    <property type="entry name" value="atpD"/>
    <property type="match status" value="1"/>
</dbReference>
<dbReference type="PANTHER" id="PTHR15184">
    <property type="entry name" value="ATP SYNTHASE"/>
    <property type="match status" value="1"/>
</dbReference>
<dbReference type="PANTHER" id="PTHR15184:SF71">
    <property type="entry name" value="ATP SYNTHASE SUBUNIT BETA, MITOCHONDRIAL"/>
    <property type="match status" value="1"/>
</dbReference>
<dbReference type="Pfam" id="PF00006">
    <property type="entry name" value="ATP-synt_ab"/>
    <property type="match status" value="1"/>
</dbReference>
<dbReference type="Pfam" id="PF22919">
    <property type="entry name" value="ATP-synt_VA_C"/>
    <property type="match status" value="1"/>
</dbReference>
<dbReference type="SUPFAM" id="SSF47917">
    <property type="entry name" value="C-terminal domain of alpha and beta subunits of F1 ATP synthase"/>
    <property type="match status" value="1"/>
</dbReference>
<dbReference type="SUPFAM" id="SSF52540">
    <property type="entry name" value="P-loop containing nucleoside triphosphate hydrolases"/>
    <property type="match status" value="1"/>
</dbReference>
<dbReference type="PROSITE" id="PS00152">
    <property type="entry name" value="ATPASE_ALPHA_BETA"/>
    <property type="match status" value="1"/>
</dbReference>
<protein>
    <recommendedName>
        <fullName evidence="2">ATP synthase F(1) complex catalytic subunit beta, mitochondrial</fullName>
        <ecNumber evidence="2">7.1.2.2</ecNumber>
    </recommendedName>
    <alternativeName>
        <fullName evidence="2">ATP synthase F1 subunit beta</fullName>
    </alternativeName>
</protein>
<comment type="function">
    <text evidence="2 4">Catalytic subunit beta, of the mitochondrial membrane ATP synthase complex (F(1)F(0) ATP synthase or Complex V) that produces ATP from ADP in the presence of a proton gradient across the membrane which is generated by electron transport complexes of the respiratory chain. ATP synthase complex consist of a soluble F(1) head domain - the catalytic core - and a membrane F(1) domain - the membrane proton channel. These two domains are linked by a central stalk rotating inside the F(1) region and a stationary peripheral stalk. During catalysis, ATP synthesis in the catalytic domain of F(1) is coupled via a rotary mechanism of the central stalk subunits to proton translocation (By similarity). In vivo, can only synthesize ATP although its ATP hydrolase activity can be activated artificially in vitro (By similarity). With the subunit alpha (ATP5F1A), forms the catalytic core in the F(1) domain (By similarity).</text>
</comment>
<comment type="catalytic activity">
    <reaction evidence="1">
        <text>ATP + H2O + 4 H(+)(in) = ADP + phosphate + 5 H(+)(out)</text>
        <dbReference type="Rhea" id="RHEA:57720"/>
        <dbReference type="ChEBI" id="CHEBI:15377"/>
        <dbReference type="ChEBI" id="CHEBI:15378"/>
        <dbReference type="ChEBI" id="CHEBI:30616"/>
        <dbReference type="ChEBI" id="CHEBI:43474"/>
        <dbReference type="ChEBI" id="CHEBI:456216"/>
        <dbReference type="EC" id="7.1.2.2"/>
    </reaction>
    <physiologicalReaction direction="right-to-left" evidence="1">
        <dbReference type="Rhea" id="RHEA:57722"/>
    </physiologicalReaction>
</comment>
<comment type="subunit">
    <text evidence="2 3 5">Homotrimer. Component of the ATP synthase complex composed at least of ATP5F1A/subunit alpha, ATP5F1B/subunit beta, ATP5MC1/subunit c (homooctomer), MT-ATP6/subunit a, MT-ATP8/subunit 8, ATP5ME/subunit e, ATP5MF/subunit f, ATP5MG/subunit g, ATP5MK/subunit k, ATP5MJ/subunit j, ATP5F1C/subunit gamma, ATP5F1D/subunit delta, ATP5F1E/subunit epsilon, ATP5PF/subunit F6, ATP5PB/subunit b, ATP5PD/subunit d, ATP5PO/subunit OSCP. ATP synthase complex consists of a soluble F(1) head domain (subunits alpha(3) and beta(3)) - the catalytic core - and a membrane F(0) domain - the membrane proton channel (subunits c, a, 8, e, f, g, k and j). These two domains are linked by a central stalk (subunits gamma, delta, and epsilon) rotating inside the F1 region and a stationary peripheral stalk (subunits F6, b, d, and OSCP) (By similarity). Interacts with PPIF (By similarity). Interacts with BCL2L1 isoform BCL-X(L); the interaction mediates the association of BCL2L1 isoform BCL-X(L) with the mitochondrial membrane F(1)F(0) ATP synthase and enhances neurons metabolic efficiency (By similarity). Interacts with CLN5 and PPT1. Interacts with S100A1; this interaction increases F1-ATPase activity (By similarity). Interacts with MTLN. Interacts with TTC5/STRAP; the interaction results in decreased mitochondrial ATP production (By similarity).</text>
</comment>
<comment type="subcellular location">
    <subcellularLocation>
        <location evidence="1">Mitochondrion inner membrane</location>
        <topology evidence="1">Peripheral membrane protein</topology>
        <orientation evidence="1">Matrix side</orientation>
    </subcellularLocation>
</comment>
<comment type="similarity">
    <text evidence="6">Belongs to the ATPase alpha/beta chains family.</text>
</comment>
<keyword id="KW-0007">Acetylation</keyword>
<keyword id="KW-0066">ATP synthesis</keyword>
<keyword id="KW-0067">ATP-binding</keyword>
<keyword id="KW-0139">CF(1)</keyword>
<keyword id="KW-0375">Hydrogen ion transport</keyword>
<keyword id="KW-0406">Ion transport</keyword>
<keyword id="KW-0460">Magnesium</keyword>
<keyword id="KW-0472">Membrane</keyword>
<keyword id="KW-0479">Metal-binding</keyword>
<keyword id="KW-0496">Mitochondrion</keyword>
<keyword id="KW-0999">Mitochondrion inner membrane</keyword>
<keyword id="KW-0547">Nucleotide-binding</keyword>
<keyword id="KW-0597">Phosphoprotein</keyword>
<keyword id="KW-1185">Reference proteome</keyword>
<keyword id="KW-1278">Translocase</keyword>
<keyword id="KW-0813">Transport</keyword>
<gene>
    <name evidence="2" type="primary">ATP5F1B</name>
    <name evidence="7" type="synonym">ATP5B</name>
</gene>
<name>ATPB_MESAU</name>
<evidence type="ECO:0000250" key="1">
    <source>
        <dbReference type="UniProtKB" id="P00829"/>
    </source>
</evidence>
<evidence type="ECO:0000250" key="2">
    <source>
        <dbReference type="UniProtKB" id="P06576"/>
    </source>
</evidence>
<evidence type="ECO:0000250" key="3">
    <source>
        <dbReference type="UniProtKB" id="P10719"/>
    </source>
</evidence>
<evidence type="ECO:0000250" key="4">
    <source>
        <dbReference type="UniProtKB" id="P19483"/>
    </source>
</evidence>
<evidence type="ECO:0000250" key="5">
    <source>
        <dbReference type="UniProtKB" id="P56480"/>
    </source>
</evidence>
<evidence type="ECO:0000255" key="6"/>
<evidence type="ECO:0000312" key="7">
    <source>
        <dbReference type="EMBL" id="ABD77235.1"/>
    </source>
</evidence>
<reference evidence="7" key="1">
    <citation type="journal article" date="2006" name="Mol. Biol. Evol.">
        <title>Housekeeping genes for phylogenetic analysis of eutherian relationships.</title>
        <authorList>
            <person name="Kullberg M."/>
            <person name="Nilsson M.A."/>
            <person name="Arnason U."/>
            <person name="Harley E.H."/>
            <person name="Janke A."/>
        </authorList>
    </citation>
    <scope>NUCLEOTIDE SEQUENCE [MRNA]</scope>
    <source>
        <tissue evidence="7">Liver</tissue>
    </source>
</reference>
<reference key="2">
    <citation type="journal article" date="2010" name="Asian J. Androl.">
        <title>Glucose-regulated protein precursor (GRP78) and tumor rejection antigen (GP96) are unique to hamster caput epididymal spermatozoa.</title>
        <authorList>
            <person name="Kameshwari D.B."/>
            <person name="Bhande S."/>
            <person name="Sundaram C.S."/>
            <person name="Kota V."/>
            <person name="Siva A.B."/>
            <person name="Shivaji S."/>
        </authorList>
    </citation>
    <scope>IDENTIFICATION BY MASS SPECTROMETRY</scope>
</reference>
<feature type="chain" id="PRO_0000394745" description="ATP synthase F(1) complex catalytic subunit beta, mitochondrial">
    <location>
        <begin position="1" status="less than"/>
        <end position="362" status="greater than"/>
    </location>
</feature>
<feature type="binding site" evidence="1">
    <location>
        <position position="62"/>
    </location>
    <ligand>
        <name>ADP</name>
        <dbReference type="ChEBI" id="CHEBI:456216"/>
    </ligand>
</feature>
<feature type="binding site" evidence="1">
    <location>
        <position position="62"/>
    </location>
    <ligand>
        <name>ATP</name>
        <dbReference type="ChEBI" id="CHEBI:30616"/>
    </ligand>
</feature>
<feature type="binding site" evidence="1">
    <location>
        <position position="62"/>
    </location>
    <ligand>
        <name>phosphate</name>
        <dbReference type="ChEBI" id="CHEBI:43474"/>
    </ligand>
</feature>
<feature type="binding site" evidence="1">
    <location>
        <position position="63"/>
    </location>
    <ligand>
        <name>ADP</name>
        <dbReference type="ChEBI" id="CHEBI:456216"/>
    </ligand>
</feature>
<feature type="binding site" evidence="1">
    <location>
        <position position="63"/>
    </location>
    <ligand>
        <name>phosphate</name>
        <dbReference type="ChEBI" id="CHEBI:43474"/>
    </ligand>
</feature>
<feature type="binding site" evidence="1">
    <location>
        <position position="64"/>
    </location>
    <ligand>
        <name>ADP</name>
        <dbReference type="ChEBI" id="CHEBI:456216"/>
    </ligand>
</feature>
<feature type="binding site" evidence="1">
    <location>
        <position position="64"/>
    </location>
    <ligand>
        <name>ATP</name>
        <dbReference type="ChEBI" id="CHEBI:30616"/>
    </ligand>
</feature>
<feature type="binding site" evidence="1">
    <location>
        <position position="64"/>
    </location>
    <ligand>
        <name>phosphate</name>
        <dbReference type="ChEBI" id="CHEBI:43474"/>
    </ligand>
</feature>
<feature type="binding site" evidence="1">
    <location>
        <position position="65"/>
    </location>
    <ligand>
        <name>ADP</name>
        <dbReference type="ChEBI" id="CHEBI:456216"/>
    </ligand>
</feature>
<feature type="binding site" evidence="1">
    <location>
        <position position="65"/>
    </location>
    <ligand>
        <name>ATP</name>
        <dbReference type="ChEBI" id="CHEBI:30616"/>
    </ligand>
</feature>
<feature type="binding site" evidence="1">
    <location>
        <position position="65"/>
    </location>
    <ligand>
        <name>phosphate</name>
        <dbReference type="ChEBI" id="CHEBI:43474"/>
    </ligand>
</feature>
<feature type="binding site" evidence="1">
    <location>
        <position position="66"/>
    </location>
    <ligand>
        <name>ADP</name>
        <dbReference type="ChEBI" id="CHEBI:456216"/>
    </ligand>
</feature>
<feature type="binding site" evidence="1">
    <location>
        <position position="66"/>
    </location>
    <ligand>
        <name>ATP</name>
        <dbReference type="ChEBI" id="CHEBI:30616"/>
    </ligand>
</feature>
<feature type="binding site" evidence="1">
    <location>
        <position position="66"/>
    </location>
    <ligand>
        <name>Mg(2+)</name>
        <dbReference type="ChEBI" id="CHEBI:18420"/>
        <label>1</label>
        <note>ligand shared between two neighboring subunits</note>
    </ligand>
</feature>
<feature type="binding site" evidence="1">
    <location>
        <position position="66"/>
    </location>
    <ligand>
        <name>phosphate</name>
        <dbReference type="ChEBI" id="CHEBI:43474"/>
    </ligand>
</feature>
<feature type="binding site" evidence="1">
    <location>
        <position position="67"/>
    </location>
    <ligand>
        <name>ADP</name>
        <dbReference type="ChEBI" id="CHEBI:456216"/>
    </ligand>
</feature>
<feature type="binding site" evidence="1">
    <location>
        <position position="67"/>
    </location>
    <ligand>
        <name>ATP</name>
        <dbReference type="ChEBI" id="CHEBI:30616"/>
    </ligand>
</feature>
<feature type="binding site" evidence="1">
    <location>
        <position position="91"/>
    </location>
    <ligand>
        <name>Mg(2+)</name>
        <dbReference type="ChEBI" id="CHEBI:18420"/>
        <label>2</label>
        <note>ligand shared between two neighboring subunits</note>
    </ligand>
</feature>
<feature type="modified residue" description="N6-acetyllysine; alternate" evidence="5">
    <location>
        <position position="14"/>
    </location>
</feature>
<feature type="modified residue" description="N6-succinyllysine; alternate" evidence="5">
    <location>
        <position position="14"/>
    </location>
</feature>
<feature type="modified residue" description="N6-acetyllysine" evidence="2">
    <location>
        <position position="51"/>
    </location>
</feature>
<feature type="modified residue" description="N6-acetyllysine; alternate" evidence="5">
    <location>
        <position position="112"/>
    </location>
</feature>
<feature type="modified residue" description="N6-succinyllysine; alternate" evidence="5">
    <location>
        <position position="112"/>
    </location>
</feature>
<feature type="modified residue" description="N6-acetyllysine; alternate" evidence="5">
    <location>
        <position position="117"/>
    </location>
</feature>
<feature type="modified residue" description="N6-succinyllysine; alternate" evidence="5">
    <location>
        <position position="117"/>
    </location>
</feature>
<feature type="modified residue" description="Phosphothreonine" evidence="5">
    <location>
        <position position="165"/>
    </location>
</feature>
<feature type="modified residue" description="N6-acetyllysine" evidence="2">
    <location>
        <position position="279"/>
    </location>
</feature>
<feature type="modified residue" description="Phosphoserine" evidence="3">
    <location>
        <position position="286"/>
    </location>
</feature>
<feature type="modified residue" description="N6-acetyllysine" evidence="5">
    <location>
        <position position="333"/>
    </location>
</feature>
<feature type="modified residue" description="N6-acetyllysine" evidence="5">
    <location>
        <position position="338"/>
    </location>
</feature>
<feature type="non-terminal residue" evidence="7">
    <location>
        <position position="1"/>
    </location>
</feature>
<feature type="non-terminal residue" evidence="7">
    <location>
        <position position="362"/>
    </location>
</feature>
<proteinExistence type="evidence at protein level"/>
<accession>Q0QEP2</accession>